<organism>
    <name type="scientific">Salmonella dublin (strain CT_02021853)</name>
    <dbReference type="NCBI Taxonomy" id="439851"/>
    <lineage>
        <taxon>Bacteria</taxon>
        <taxon>Pseudomonadati</taxon>
        <taxon>Pseudomonadota</taxon>
        <taxon>Gammaproteobacteria</taxon>
        <taxon>Enterobacterales</taxon>
        <taxon>Enterobacteriaceae</taxon>
        <taxon>Salmonella</taxon>
    </lineage>
</organism>
<reference key="1">
    <citation type="journal article" date="2011" name="J. Bacteriol.">
        <title>Comparative genomics of 28 Salmonella enterica isolates: evidence for CRISPR-mediated adaptive sublineage evolution.</title>
        <authorList>
            <person name="Fricke W.F."/>
            <person name="Mammel M.K."/>
            <person name="McDermott P.F."/>
            <person name="Tartera C."/>
            <person name="White D.G."/>
            <person name="Leclerc J.E."/>
            <person name="Ravel J."/>
            <person name="Cebula T.A."/>
        </authorList>
    </citation>
    <scope>NUCLEOTIDE SEQUENCE [LARGE SCALE GENOMIC DNA]</scope>
    <source>
        <strain>CT_02021853</strain>
    </source>
</reference>
<gene>
    <name evidence="1" type="primary">ubiA</name>
    <name type="ordered locus">SeD_A4628</name>
</gene>
<name>UBIA_SALDC</name>
<sequence length="290" mass="32602">MEWSLTQSKLLAFHRLMRTDKPIGALLLLWPTLWALWVATPGMPQLWILAVFVAGVWLMRAAGCVVNDYADRKFDGHVKRTVNRPLPSGAVTEKEARNLFVVLVLLAFLLVLTLNAMTILLSVAALALAWVYPFMKRYTHLPQVVLGAAFGWSIPMAFAAVSESLPLSCWLMFLANILWAVAYDTQYAMVDRDDDIKIGIKSTAILFGRYDTLIIGILQLGVMALMALIGWLNGLGWGYYWAVLVAGALFVYQQKLIANREREACFKAFMNNNYVGLVLFLGLAMSYWHF</sequence>
<proteinExistence type="inferred from homology"/>
<accession>B5FQQ8</accession>
<feature type="chain" id="PRO_1000186682" description="4-hydroxybenzoate octaprenyltransferase">
    <location>
        <begin position="1"/>
        <end position="290"/>
    </location>
</feature>
<feature type="transmembrane region" description="Helical" evidence="1">
    <location>
        <begin position="23"/>
        <end position="43"/>
    </location>
</feature>
<feature type="transmembrane region" description="Helical" evidence="1">
    <location>
        <begin position="46"/>
        <end position="66"/>
    </location>
</feature>
<feature type="transmembrane region" description="Helical" evidence="1">
    <location>
        <begin position="99"/>
        <end position="119"/>
    </location>
</feature>
<feature type="transmembrane region" description="Helical" evidence="1">
    <location>
        <begin position="141"/>
        <end position="161"/>
    </location>
</feature>
<feature type="transmembrane region" description="Helical" evidence="1">
    <location>
        <begin position="163"/>
        <end position="183"/>
    </location>
</feature>
<feature type="transmembrane region" description="Helical" evidence="1">
    <location>
        <begin position="212"/>
        <end position="232"/>
    </location>
</feature>
<feature type="transmembrane region" description="Helical" evidence="1">
    <location>
        <begin position="233"/>
        <end position="253"/>
    </location>
</feature>
<feature type="transmembrane region" description="Helical" evidence="1">
    <location>
        <begin position="268"/>
        <end position="288"/>
    </location>
</feature>
<evidence type="ECO:0000255" key="1">
    <source>
        <dbReference type="HAMAP-Rule" id="MF_01635"/>
    </source>
</evidence>
<keyword id="KW-0997">Cell inner membrane</keyword>
<keyword id="KW-1003">Cell membrane</keyword>
<keyword id="KW-0460">Magnesium</keyword>
<keyword id="KW-0472">Membrane</keyword>
<keyword id="KW-0808">Transferase</keyword>
<keyword id="KW-0812">Transmembrane</keyword>
<keyword id="KW-1133">Transmembrane helix</keyword>
<keyword id="KW-0831">Ubiquinone biosynthesis</keyword>
<protein>
    <recommendedName>
        <fullName evidence="1">4-hydroxybenzoate octaprenyltransferase</fullName>
        <ecNumber evidence="1">2.5.1.39</ecNumber>
    </recommendedName>
    <alternativeName>
        <fullName evidence="1">4-HB polyprenyltransferase</fullName>
    </alternativeName>
</protein>
<dbReference type="EC" id="2.5.1.39" evidence="1"/>
<dbReference type="EMBL" id="CP001144">
    <property type="protein sequence ID" value="ACH73835.1"/>
    <property type="molecule type" value="Genomic_DNA"/>
</dbReference>
<dbReference type="RefSeq" id="WP_000455249.1">
    <property type="nucleotide sequence ID" value="NC_011205.1"/>
</dbReference>
<dbReference type="SMR" id="B5FQQ8"/>
<dbReference type="KEGG" id="sed:SeD_A4628"/>
<dbReference type="HOGENOM" id="CLU_034879_1_0_6"/>
<dbReference type="UniPathway" id="UPA00232"/>
<dbReference type="Proteomes" id="UP000008322">
    <property type="component" value="Chromosome"/>
</dbReference>
<dbReference type="GO" id="GO:0005886">
    <property type="term" value="C:plasma membrane"/>
    <property type="evidence" value="ECO:0007669"/>
    <property type="project" value="UniProtKB-SubCell"/>
</dbReference>
<dbReference type="GO" id="GO:0008412">
    <property type="term" value="F:4-hydroxybenzoate polyprenyltransferase activity"/>
    <property type="evidence" value="ECO:0007669"/>
    <property type="project" value="UniProtKB-UniRule"/>
</dbReference>
<dbReference type="GO" id="GO:0006744">
    <property type="term" value="P:ubiquinone biosynthetic process"/>
    <property type="evidence" value="ECO:0007669"/>
    <property type="project" value="UniProtKB-UniRule"/>
</dbReference>
<dbReference type="CDD" id="cd13959">
    <property type="entry name" value="PT_UbiA_COQ2"/>
    <property type="match status" value="1"/>
</dbReference>
<dbReference type="FunFam" id="1.10.357.140:FF:000002">
    <property type="entry name" value="4-hydroxybenzoate octaprenyltransferase"/>
    <property type="match status" value="1"/>
</dbReference>
<dbReference type="FunFam" id="1.20.120.1780:FF:000001">
    <property type="entry name" value="4-hydroxybenzoate octaprenyltransferase"/>
    <property type="match status" value="1"/>
</dbReference>
<dbReference type="Gene3D" id="1.10.357.140">
    <property type="entry name" value="UbiA prenyltransferase"/>
    <property type="match status" value="1"/>
</dbReference>
<dbReference type="Gene3D" id="1.20.120.1780">
    <property type="entry name" value="UbiA prenyltransferase"/>
    <property type="match status" value="1"/>
</dbReference>
<dbReference type="HAMAP" id="MF_01635">
    <property type="entry name" value="UbiA"/>
    <property type="match status" value="1"/>
</dbReference>
<dbReference type="InterPro" id="IPR006370">
    <property type="entry name" value="HB_polyprenyltransferase-like"/>
</dbReference>
<dbReference type="InterPro" id="IPR039653">
    <property type="entry name" value="Prenyltransferase"/>
</dbReference>
<dbReference type="InterPro" id="IPR000537">
    <property type="entry name" value="UbiA_prenyltransferase"/>
</dbReference>
<dbReference type="InterPro" id="IPR030470">
    <property type="entry name" value="UbiA_prenylTrfase_CS"/>
</dbReference>
<dbReference type="InterPro" id="IPR044878">
    <property type="entry name" value="UbiA_sf"/>
</dbReference>
<dbReference type="NCBIfam" id="TIGR01474">
    <property type="entry name" value="ubiA_proteo"/>
    <property type="match status" value="1"/>
</dbReference>
<dbReference type="PANTHER" id="PTHR11048:SF28">
    <property type="entry name" value="4-HYDROXYBENZOATE POLYPRENYLTRANSFERASE, MITOCHONDRIAL"/>
    <property type="match status" value="1"/>
</dbReference>
<dbReference type="PANTHER" id="PTHR11048">
    <property type="entry name" value="PRENYLTRANSFERASES"/>
    <property type="match status" value="1"/>
</dbReference>
<dbReference type="Pfam" id="PF01040">
    <property type="entry name" value="UbiA"/>
    <property type="match status" value="1"/>
</dbReference>
<dbReference type="PROSITE" id="PS00943">
    <property type="entry name" value="UBIA"/>
    <property type="match status" value="1"/>
</dbReference>
<comment type="function">
    <text evidence="1">Catalyzes the prenylation of para-hydroxybenzoate (PHB) with an all-trans polyprenyl group. Mediates the second step in the final reaction sequence of ubiquinone-8 (UQ-8) biosynthesis, which is the condensation of the polyisoprenoid side chain with PHB, generating the first membrane-bound Q intermediate 3-octaprenyl-4-hydroxybenzoate.</text>
</comment>
<comment type="catalytic activity">
    <reaction evidence="1">
        <text>all-trans-octaprenyl diphosphate + 4-hydroxybenzoate = 4-hydroxy-3-(all-trans-octaprenyl)benzoate + diphosphate</text>
        <dbReference type="Rhea" id="RHEA:27782"/>
        <dbReference type="ChEBI" id="CHEBI:1617"/>
        <dbReference type="ChEBI" id="CHEBI:17879"/>
        <dbReference type="ChEBI" id="CHEBI:33019"/>
        <dbReference type="ChEBI" id="CHEBI:57711"/>
        <dbReference type="EC" id="2.5.1.39"/>
    </reaction>
</comment>
<comment type="cofactor">
    <cofactor evidence="1">
        <name>Mg(2+)</name>
        <dbReference type="ChEBI" id="CHEBI:18420"/>
    </cofactor>
</comment>
<comment type="pathway">
    <text evidence="1">Cofactor biosynthesis; ubiquinone biosynthesis.</text>
</comment>
<comment type="subcellular location">
    <subcellularLocation>
        <location evidence="1">Cell inner membrane</location>
        <topology evidence="1">Multi-pass membrane protein</topology>
    </subcellularLocation>
</comment>
<comment type="similarity">
    <text evidence="1">Belongs to the UbiA prenyltransferase family.</text>
</comment>